<gene>
    <name evidence="1" type="primary">mnmE</name>
    <name evidence="1" type="synonym">trmE</name>
    <name type="ordered locus">Mmc1_3756</name>
</gene>
<name>MNME_MAGMM</name>
<protein>
    <recommendedName>
        <fullName evidence="1">tRNA modification GTPase MnmE</fullName>
        <ecNumber evidence="1">3.6.-.-</ecNumber>
    </recommendedName>
</protein>
<organism>
    <name type="scientific">Magnetococcus marinus (strain ATCC BAA-1437 / JCM 17883 / MC-1)</name>
    <dbReference type="NCBI Taxonomy" id="156889"/>
    <lineage>
        <taxon>Bacteria</taxon>
        <taxon>Pseudomonadati</taxon>
        <taxon>Pseudomonadota</taxon>
        <taxon>Alphaproteobacteria</taxon>
        <taxon>Magnetococcales</taxon>
        <taxon>Magnetococcaceae</taxon>
        <taxon>Magnetococcus</taxon>
    </lineage>
</organism>
<reference key="1">
    <citation type="journal article" date="2009" name="Appl. Environ. Microbiol.">
        <title>Complete genome sequence of the chemolithoautotrophic marine magnetotactic coccus strain MC-1.</title>
        <authorList>
            <person name="Schubbe S."/>
            <person name="Williams T.J."/>
            <person name="Xie G."/>
            <person name="Kiss H.E."/>
            <person name="Brettin T.S."/>
            <person name="Martinez D."/>
            <person name="Ross C.A."/>
            <person name="Schuler D."/>
            <person name="Cox B.L."/>
            <person name="Nealson K.H."/>
            <person name="Bazylinski D.A."/>
        </authorList>
    </citation>
    <scope>NUCLEOTIDE SEQUENCE [LARGE SCALE GENOMIC DNA]</scope>
    <source>
        <strain>ATCC BAA-1437 / JCM 17883 / MC-1</strain>
    </source>
</reference>
<comment type="function">
    <text evidence="1">Exhibits a very high intrinsic GTPase hydrolysis rate. Involved in the addition of a carboxymethylaminomethyl (cmnm) group at the wobble position (U34) of certain tRNAs, forming tRNA-cmnm(5)s(2)U34.</text>
</comment>
<comment type="cofactor">
    <cofactor evidence="1">
        <name>K(+)</name>
        <dbReference type="ChEBI" id="CHEBI:29103"/>
    </cofactor>
    <text evidence="1">Binds 1 potassium ion per subunit.</text>
</comment>
<comment type="subunit">
    <text evidence="1">Homodimer. Heterotetramer of two MnmE and two MnmG subunits.</text>
</comment>
<comment type="subcellular location">
    <subcellularLocation>
        <location evidence="1">Cytoplasm</location>
    </subcellularLocation>
</comment>
<comment type="similarity">
    <text evidence="1">Belongs to the TRAFAC class TrmE-Era-EngA-EngB-Septin-like GTPase superfamily. TrmE GTPase family.</text>
</comment>
<dbReference type="EC" id="3.6.-.-" evidence="1"/>
<dbReference type="EMBL" id="CP000471">
    <property type="protein sequence ID" value="ABK46241.1"/>
    <property type="molecule type" value="Genomic_DNA"/>
</dbReference>
<dbReference type="RefSeq" id="WP_011715293.1">
    <property type="nucleotide sequence ID" value="NC_008576.1"/>
</dbReference>
<dbReference type="SMR" id="A0LE48"/>
<dbReference type="STRING" id="156889.Mmc1_3756"/>
<dbReference type="KEGG" id="mgm:Mmc1_3756"/>
<dbReference type="eggNOG" id="COG0486">
    <property type="taxonomic scope" value="Bacteria"/>
</dbReference>
<dbReference type="HOGENOM" id="CLU_019624_4_1_5"/>
<dbReference type="OrthoDB" id="9805918at2"/>
<dbReference type="Proteomes" id="UP000002586">
    <property type="component" value="Chromosome"/>
</dbReference>
<dbReference type="GO" id="GO:0005737">
    <property type="term" value="C:cytoplasm"/>
    <property type="evidence" value="ECO:0007669"/>
    <property type="project" value="UniProtKB-SubCell"/>
</dbReference>
<dbReference type="GO" id="GO:0005525">
    <property type="term" value="F:GTP binding"/>
    <property type="evidence" value="ECO:0007669"/>
    <property type="project" value="UniProtKB-UniRule"/>
</dbReference>
<dbReference type="GO" id="GO:0003924">
    <property type="term" value="F:GTPase activity"/>
    <property type="evidence" value="ECO:0007669"/>
    <property type="project" value="UniProtKB-UniRule"/>
</dbReference>
<dbReference type="GO" id="GO:0046872">
    <property type="term" value="F:metal ion binding"/>
    <property type="evidence" value="ECO:0007669"/>
    <property type="project" value="UniProtKB-KW"/>
</dbReference>
<dbReference type="GO" id="GO:0030488">
    <property type="term" value="P:tRNA methylation"/>
    <property type="evidence" value="ECO:0007669"/>
    <property type="project" value="TreeGrafter"/>
</dbReference>
<dbReference type="GO" id="GO:0002098">
    <property type="term" value="P:tRNA wobble uridine modification"/>
    <property type="evidence" value="ECO:0007669"/>
    <property type="project" value="TreeGrafter"/>
</dbReference>
<dbReference type="CDD" id="cd04164">
    <property type="entry name" value="trmE"/>
    <property type="match status" value="1"/>
</dbReference>
<dbReference type="CDD" id="cd14858">
    <property type="entry name" value="TrmE_N"/>
    <property type="match status" value="1"/>
</dbReference>
<dbReference type="Gene3D" id="3.40.50.300">
    <property type="entry name" value="P-loop containing nucleotide triphosphate hydrolases"/>
    <property type="match status" value="1"/>
</dbReference>
<dbReference type="Gene3D" id="3.30.1360.120">
    <property type="entry name" value="Probable tRNA modification gtpase trme, domain 1"/>
    <property type="match status" value="1"/>
</dbReference>
<dbReference type="Gene3D" id="1.20.120.430">
    <property type="entry name" value="tRNA modification GTPase MnmE domain 2"/>
    <property type="match status" value="1"/>
</dbReference>
<dbReference type="HAMAP" id="MF_00379">
    <property type="entry name" value="GTPase_MnmE"/>
    <property type="match status" value="1"/>
</dbReference>
<dbReference type="InterPro" id="IPR031168">
    <property type="entry name" value="G_TrmE"/>
</dbReference>
<dbReference type="InterPro" id="IPR006073">
    <property type="entry name" value="GTP-bd"/>
</dbReference>
<dbReference type="InterPro" id="IPR018948">
    <property type="entry name" value="GTP-bd_TrmE_N"/>
</dbReference>
<dbReference type="InterPro" id="IPR004520">
    <property type="entry name" value="GTPase_MnmE"/>
</dbReference>
<dbReference type="InterPro" id="IPR027368">
    <property type="entry name" value="MnmE_dom2"/>
</dbReference>
<dbReference type="InterPro" id="IPR025867">
    <property type="entry name" value="MnmE_helical"/>
</dbReference>
<dbReference type="InterPro" id="IPR027417">
    <property type="entry name" value="P-loop_NTPase"/>
</dbReference>
<dbReference type="InterPro" id="IPR005225">
    <property type="entry name" value="Small_GTP-bd"/>
</dbReference>
<dbReference type="InterPro" id="IPR027266">
    <property type="entry name" value="TrmE/GcvT_dom1"/>
</dbReference>
<dbReference type="NCBIfam" id="TIGR00450">
    <property type="entry name" value="mnmE_trmE_thdF"/>
    <property type="match status" value="1"/>
</dbReference>
<dbReference type="NCBIfam" id="NF003661">
    <property type="entry name" value="PRK05291.1-3"/>
    <property type="match status" value="1"/>
</dbReference>
<dbReference type="NCBIfam" id="TIGR00231">
    <property type="entry name" value="small_GTP"/>
    <property type="match status" value="1"/>
</dbReference>
<dbReference type="PANTHER" id="PTHR42714">
    <property type="entry name" value="TRNA MODIFICATION GTPASE GTPBP3"/>
    <property type="match status" value="1"/>
</dbReference>
<dbReference type="PANTHER" id="PTHR42714:SF2">
    <property type="entry name" value="TRNA MODIFICATION GTPASE GTPBP3, MITOCHONDRIAL"/>
    <property type="match status" value="1"/>
</dbReference>
<dbReference type="Pfam" id="PF01926">
    <property type="entry name" value="MMR_HSR1"/>
    <property type="match status" value="1"/>
</dbReference>
<dbReference type="Pfam" id="PF12631">
    <property type="entry name" value="MnmE_helical"/>
    <property type="match status" value="1"/>
</dbReference>
<dbReference type="Pfam" id="PF10396">
    <property type="entry name" value="TrmE_N"/>
    <property type="match status" value="1"/>
</dbReference>
<dbReference type="SUPFAM" id="SSF52540">
    <property type="entry name" value="P-loop containing nucleoside triphosphate hydrolases"/>
    <property type="match status" value="1"/>
</dbReference>
<dbReference type="PROSITE" id="PS51709">
    <property type="entry name" value="G_TRME"/>
    <property type="match status" value="1"/>
</dbReference>
<keyword id="KW-0963">Cytoplasm</keyword>
<keyword id="KW-0342">GTP-binding</keyword>
<keyword id="KW-0378">Hydrolase</keyword>
<keyword id="KW-0460">Magnesium</keyword>
<keyword id="KW-0479">Metal-binding</keyword>
<keyword id="KW-0547">Nucleotide-binding</keyword>
<keyword id="KW-0630">Potassium</keyword>
<keyword id="KW-1185">Reference proteome</keyword>
<keyword id="KW-0819">tRNA processing</keyword>
<proteinExistence type="inferred from homology"/>
<sequence>MLRTPLLHEQDCIIGMATPPGTSGVAVLRLSGPGVLSLVVPYLYTPKGEKVAESGFKPRVMRRLNFIDPQAPDVPLDHMLVVHFPNPHSFSGEDMVELHGHGAPVVVKRIMEVLVAHGVRPADPGEFSKRAFFNNKMDLVQAEALMGLIEATSLRAAREASRQMTGTLSEHLMALKDHLVLTYAHLEAALDFSDEDIEPESEGGLLDRLAYVHAGIKKMLGTAELGRQMRDGFELAIVGRPNVGKSSLFNALSGEDRAIVTDLAGTTRDLNESNLEIHGLPILLVDTAGLRESDDPVERIGIERAWQRVERADGIVFVAEAQLGVTLEDKALLQRLPKEKALWVWNKLDQLEGALPECLQDWPEEQICGVSCHTGEGLESVVAHIVARMEQLPEHGEGVVIMQLRQQQTLQQAIVLIEEAQEMLANGQWLELVAEPLTRSIDQLTQLMGNTDYEDVLGMVFSSFCVGK</sequence>
<accession>A0LE48</accession>
<evidence type="ECO:0000255" key="1">
    <source>
        <dbReference type="HAMAP-Rule" id="MF_00379"/>
    </source>
</evidence>
<feature type="chain" id="PRO_0000345824" description="tRNA modification GTPase MnmE">
    <location>
        <begin position="1"/>
        <end position="468"/>
    </location>
</feature>
<feature type="domain" description="TrmE-type G">
    <location>
        <begin position="232"/>
        <end position="390"/>
    </location>
</feature>
<feature type="binding site" evidence="1">
    <location>
        <position position="29"/>
    </location>
    <ligand>
        <name>(6S)-5-formyl-5,6,7,8-tetrahydrofolate</name>
        <dbReference type="ChEBI" id="CHEBI:57457"/>
    </ligand>
</feature>
<feature type="binding site" evidence="1">
    <location>
        <position position="97"/>
    </location>
    <ligand>
        <name>(6S)-5-formyl-5,6,7,8-tetrahydrofolate</name>
        <dbReference type="ChEBI" id="CHEBI:57457"/>
    </ligand>
</feature>
<feature type="binding site" evidence="1">
    <location>
        <position position="136"/>
    </location>
    <ligand>
        <name>(6S)-5-formyl-5,6,7,8-tetrahydrofolate</name>
        <dbReference type="ChEBI" id="CHEBI:57457"/>
    </ligand>
</feature>
<feature type="binding site" evidence="1">
    <location>
        <begin position="242"/>
        <end position="247"/>
    </location>
    <ligand>
        <name>GTP</name>
        <dbReference type="ChEBI" id="CHEBI:37565"/>
    </ligand>
</feature>
<feature type="binding site" evidence="1">
    <location>
        <position position="242"/>
    </location>
    <ligand>
        <name>K(+)</name>
        <dbReference type="ChEBI" id="CHEBI:29103"/>
    </ligand>
</feature>
<feature type="binding site" evidence="1">
    <location>
        <position position="246"/>
    </location>
    <ligand>
        <name>Mg(2+)</name>
        <dbReference type="ChEBI" id="CHEBI:18420"/>
    </ligand>
</feature>
<feature type="binding site" evidence="1">
    <location>
        <begin position="261"/>
        <end position="267"/>
    </location>
    <ligand>
        <name>GTP</name>
        <dbReference type="ChEBI" id="CHEBI:37565"/>
    </ligand>
</feature>
<feature type="binding site" evidence="1">
    <location>
        <position position="261"/>
    </location>
    <ligand>
        <name>K(+)</name>
        <dbReference type="ChEBI" id="CHEBI:29103"/>
    </ligand>
</feature>
<feature type="binding site" evidence="1">
    <location>
        <position position="263"/>
    </location>
    <ligand>
        <name>K(+)</name>
        <dbReference type="ChEBI" id="CHEBI:29103"/>
    </ligand>
</feature>
<feature type="binding site" evidence="1">
    <location>
        <position position="266"/>
    </location>
    <ligand>
        <name>K(+)</name>
        <dbReference type="ChEBI" id="CHEBI:29103"/>
    </ligand>
</feature>
<feature type="binding site" evidence="1">
    <location>
        <position position="267"/>
    </location>
    <ligand>
        <name>Mg(2+)</name>
        <dbReference type="ChEBI" id="CHEBI:18420"/>
    </ligand>
</feature>
<feature type="binding site" evidence="1">
    <location>
        <begin position="286"/>
        <end position="289"/>
    </location>
    <ligand>
        <name>GTP</name>
        <dbReference type="ChEBI" id="CHEBI:37565"/>
    </ligand>
</feature>
<feature type="binding site" evidence="1">
    <location>
        <position position="468"/>
    </location>
    <ligand>
        <name>(6S)-5-formyl-5,6,7,8-tetrahydrofolate</name>
        <dbReference type="ChEBI" id="CHEBI:57457"/>
    </ligand>
</feature>